<comment type="interaction">
    <interactant intactId="EBI-741463">
        <id>Q8WVF5</id>
    </interactant>
    <interactant intactId="EBI-77321">
        <id>Q9UER7</id>
        <label>DAXX</label>
    </interactant>
    <organismsDiffer>false</organismsDiffer>
    <experiments>3</experiments>
</comment>
<comment type="interaction">
    <interactant intactId="EBI-741463">
        <id>Q8WVF5</id>
    </interactant>
    <interactant intactId="EBI-743105">
        <id>Q5JVL4</id>
        <label>EFHC1</label>
    </interactant>
    <organismsDiffer>false</organismsDiffer>
    <experiments>6</experiments>
</comment>
<comment type="interaction">
    <interactant intactId="EBI-741463">
        <id>Q8WVF5</id>
    </interactant>
    <interactant intactId="EBI-741158">
        <id>Q96HA8</id>
        <label>NTAQ1</label>
    </interactant>
    <organismsDiffer>false</organismsDiffer>
    <experiments>3</experiments>
</comment>
<proteinExistence type="evidence at protein level"/>
<organism>
    <name type="scientific">Homo sapiens</name>
    <name type="common">Human</name>
    <dbReference type="NCBI Taxonomy" id="9606"/>
    <lineage>
        <taxon>Eukaryota</taxon>
        <taxon>Metazoa</taxon>
        <taxon>Chordata</taxon>
        <taxon>Craniata</taxon>
        <taxon>Vertebrata</taxon>
        <taxon>Euteleostomi</taxon>
        <taxon>Mammalia</taxon>
        <taxon>Eutheria</taxon>
        <taxon>Euarchontoglires</taxon>
        <taxon>Primates</taxon>
        <taxon>Haplorrhini</taxon>
        <taxon>Catarrhini</taxon>
        <taxon>Hominidae</taxon>
        <taxon>Homo</taxon>
    </lineage>
</organism>
<protein>
    <recommendedName>
        <fullName>BTB/POZ domain-containing protein KCTD4</fullName>
    </recommendedName>
</protein>
<evidence type="ECO:0000256" key="1">
    <source>
        <dbReference type="SAM" id="MobiDB-lite"/>
    </source>
</evidence>
<evidence type="ECO:0000305" key="2"/>
<feature type="chain" id="PRO_0000191289" description="BTB/POZ domain-containing protein KCTD4">
    <location>
        <begin position="1"/>
        <end position="259"/>
    </location>
</feature>
<feature type="domain" description="BTB">
    <location>
        <begin position="33"/>
        <end position="134"/>
    </location>
</feature>
<feature type="region of interest" description="Disordered" evidence="1">
    <location>
        <begin position="1"/>
        <end position="25"/>
    </location>
</feature>
<feature type="sequence conflict" description="In Ref. 4; AAH18063." evidence="2" ref="4">
    <original>Q</original>
    <variation>R</variation>
    <location>
        <position position="195"/>
    </location>
</feature>
<gene>
    <name type="primary">KCTD4</name>
</gene>
<name>KCTD4_HUMAN</name>
<reference key="1">
    <citation type="journal article" date="2004" name="Nat. Genet.">
        <title>Complete sequencing and characterization of 21,243 full-length human cDNAs.</title>
        <authorList>
            <person name="Ota T."/>
            <person name="Suzuki Y."/>
            <person name="Nishikawa T."/>
            <person name="Otsuki T."/>
            <person name="Sugiyama T."/>
            <person name="Irie R."/>
            <person name="Wakamatsu A."/>
            <person name="Hayashi K."/>
            <person name="Sato H."/>
            <person name="Nagai K."/>
            <person name="Kimura K."/>
            <person name="Makita H."/>
            <person name="Sekine M."/>
            <person name="Obayashi M."/>
            <person name="Nishi T."/>
            <person name="Shibahara T."/>
            <person name="Tanaka T."/>
            <person name="Ishii S."/>
            <person name="Yamamoto J."/>
            <person name="Saito K."/>
            <person name="Kawai Y."/>
            <person name="Isono Y."/>
            <person name="Nakamura Y."/>
            <person name="Nagahari K."/>
            <person name="Murakami K."/>
            <person name="Yasuda T."/>
            <person name="Iwayanagi T."/>
            <person name="Wagatsuma M."/>
            <person name="Shiratori A."/>
            <person name="Sudo H."/>
            <person name="Hosoiri T."/>
            <person name="Kaku Y."/>
            <person name="Kodaira H."/>
            <person name="Kondo H."/>
            <person name="Sugawara M."/>
            <person name="Takahashi M."/>
            <person name="Kanda K."/>
            <person name="Yokoi T."/>
            <person name="Furuya T."/>
            <person name="Kikkawa E."/>
            <person name="Omura Y."/>
            <person name="Abe K."/>
            <person name="Kamihara K."/>
            <person name="Katsuta N."/>
            <person name="Sato K."/>
            <person name="Tanikawa M."/>
            <person name="Yamazaki M."/>
            <person name="Ninomiya K."/>
            <person name="Ishibashi T."/>
            <person name="Yamashita H."/>
            <person name="Murakawa K."/>
            <person name="Fujimori K."/>
            <person name="Tanai H."/>
            <person name="Kimata M."/>
            <person name="Watanabe M."/>
            <person name="Hiraoka S."/>
            <person name="Chiba Y."/>
            <person name="Ishida S."/>
            <person name="Ono Y."/>
            <person name="Takiguchi S."/>
            <person name="Watanabe S."/>
            <person name="Yosida M."/>
            <person name="Hotuta T."/>
            <person name="Kusano J."/>
            <person name="Kanehori K."/>
            <person name="Takahashi-Fujii A."/>
            <person name="Hara H."/>
            <person name="Tanase T.-O."/>
            <person name="Nomura Y."/>
            <person name="Togiya S."/>
            <person name="Komai F."/>
            <person name="Hara R."/>
            <person name="Takeuchi K."/>
            <person name="Arita M."/>
            <person name="Imose N."/>
            <person name="Musashino K."/>
            <person name="Yuuki H."/>
            <person name="Oshima A."/>
            <person name="Sasaki N."/>
            <person name="Aotsuka S."/>
            <person name="Yoshikawa Y."/>
            <person name="Matsunawa H."/>
            <person name="Ichihara T."/>
            <person name="Shiohata N."/>
            <person name="Sano S."/>
            <person name="Moriya S."/>
            <person name="Momiyama H."/>
            <person name="Satoh N."/>
            <person name="Takami S."/>
            <person name="Terashima Y."/>
            <person name="Suzuki O."/>
            <person name="Nakagawa S."/>
            <person name="Senoh A."/>
            <person name="Mizoguchi H."/>
            <person name="Goto Y."/>
            <person name="Shimizu F."/>
            <person name="Wakebe H."/>
            <person name="Hishigaki H."/>
            <person name="Watanabe T."/>
            <person name="Sugiyama A."/>
            <person name="Takemoto M."/>
            <person name="Kawakami B."/>
            <person name="Yamazaki M."/>
            <person name="Watanabe K."/>
            <person name="Kumagai A."/>
            <person name="Itakura S."/>
            <person name="Fukuzumi Y."/>
            <person name="Fujimori Y."/>
            <person name="Komiyama M."/>
            <person name="Tashiro H."/>
            <person name="Tanigami A."/>
            <person name="Fujiwara T."/>
            <person name="Ono T."/>
            <person name="Yamada K."/>
            <person name="Fujii Y."/>
            <person name="Ozaki K."/>
            <person name="Hirao M."/>
            <person name="Ohmori Y."/>
            <person name="Kawabata A."/>
            <person name="Hikiji T."/>
            <person name="Kobatake N."/>
            <person name="Inagaki H."/>
            <person name="Ikema Y."/>
            <person name="Okamoto S."/>
            <person name="Okitani R."/>
            <person name="Kawakami T."/>
            <person name="Noguchi S."/>
            <person name="Itoh T."/>
            <person name="Shigeta K."/>
            <person name="Senba T."/>
            <person name="Matsumura K."/>
            <person name="Nakajima Y."/>
            <person name="Mizuno T."/>
            <person name="Morinaga M."/>
            <person name="Sasaki M."/>
            <person name="Togashi T."/>
            <person name="Oyama M."/>
            <person name="Hata H."/>
            <person name="Watanabe M."/>
            <person name="Komatsu T."/>
            <person name="Mizushima-Sugano J."/>
            <person name="Satoh T."/>
            <person name="Shirai Y."/>
            <person name="Takahashi Y."/>
            <person name="Nakagawa K."/>
            <person name="Okumura K."/>
            <person name="Nagase T."/>
            <person name="Nomura N."/>
            <person name="Kikuchi H."/>
            <person name="Masuho Y."/>
            <person name="Yamashita R."/>
            <person name="Nakai K."/>
            <person name="Yada T."/>
            <person name="Nakamura Y."/>
            <person name="Ohara O."/>
            <person name="Isogai T."/>
            <person name="Sugano S."/>
        </authorList>
    </citation>
    <scope>NUCLEOTIDE SEQUENCE [LARGE SCALE MRNA]</scope>
</reference>
<reference key="2">
    <citation type="journal article" date="2004" name="Nature">
        <title>The DNA sequence and analysis of human chromosome 13.</title>
        <authorList>
            <person name="Dunham A."/>
            <person name="Matthews L.H."/>
            <person name="Burton J."/>
            <person name="Ashurst J.L."/>
            <person name="Howe K.L."/>
            <person name="Ashcroft K.J."/>
            <person name="Beare D.M."/>
            <person name="Burford D.C."/>
            <person name="Hunt S.E."/>
            <person name="Griffiths-Jones S."/>
            <person name="Jones M.C."/>
            <person name="Keenan S.J."/>
            <person name="Oliver K."/>
            <person name="Scott C.E."/>
            <person name="Ainscough R."/>
            <person name="Almeida J.P."/>
            <person name="Ambrose K.D."/>
            <person name="Andrews D.T."/>
            <person name="Ashwell R.I.S."/>
            <person name="Babbage A.K."/>
            <person name="Bagguley C.L."/>
            <person name="Bailey J."/>
            <person name="Bannerjee R."/>
            <person name="Barlow K.F."/>
            <person name="Bates K."/>
            <person name="Beasley H."/>
            <person name="Bird C.P."/>
            <person name="Bray-Allen S."/>
            <person name="Brown A.J."/>
            <person name="Brown J.Y."/>
            <person name="Burrill W."/>
            <person name="Carder C."/>
            <person name="Carter N.P."/>
            <person name="Chapman J.C."/>
            <person name="Clamp M.E."/>
            <person name="Clark S.Y."/>
            <person name="Clarke G."/>
            <person name="Clee C.M."/>
            <person name="Clegg S.C."/>
            <person name="Cobley V."/>
            <person name="Collins J.E."/>
            <person name="Corby N."/>
            <person name="Coville G.J."/>
            <person name="Deloukas P."/>
            <person name="Dhami P."/>
            <person name="Dunham I."/>
            <person name="Dunn M."/>
            <person name="Earthrowl M.E."/>
            <person name="Ellington A.G."/>
            <person name="Faulkner L."/>
            <person name="Frankish A.G."/>
            <person name="Frankland J."/>
            <person name="French L."/>
            <person name="Garner P."/>
            <person name="Garnett J."/>
            <person name="Gilbert J.G.R."/>
            <person name="Gilson C.J."/>
            <person name="Ghori J."/>
            <person name="Grafham D.V."/>
            <person name="Gribble S.M."/>
            <person name="Griffiths C."/>
            <person name="Hall R.E."/>
            <person name="Hammond S."/>
            <person name="Harley J.L."/>
            <person name="Hart E.A."/>
            <person name="Heath P.D."/>
            <person name="Howden P.J."/>
            <person name="Huckle E.J."/>
            <person name="Hunt P.J."/>
            <person name="Hunt A.R."/>
            <person name="Johnson C."/>
            <person name="Johnson D."/>
            <person name="Kay M."/>
            <person name="Kimberley A.M."/>
            <person name="King A."/>
            <person name="Laird G.K."/>
            <person name="Langford C.J."/>
            <person name="Lawlor S."/>
            <person name="Leongamornlert D.A."/>
            <person name="Lloyd D.M."/>
            <person name="Lloyd C."/>
            <person name="Loveland J.E."/>
            <person name="Lovell J."/>
            <person name="Martin S."/>
            <person name="Mashreghi-Mohammadi M."/>
            <person name="McLaren S.J."/>
            <person name="McMurray A."/>
            <person name="Milne S."/>
            <person name="Moore M.J.F."/>
            <person name="Nickerson T."/>
            <person name="Palmer S.A."/>
            <person name="Pearce A.V."/>
            <person name="Peck A.I."/>
            <person name="Pelan S."/>
            <person name="Phillimore B."/>
            <person name="Porter K.M."/>
            <person name="Rice C.M."/>
            <person name="Searle S."/>
            <person name="Sehra H.K."/>
            <person name="Shownkeen R."/>
            <person name="Skuce C.D."/>
            <person name="Smith M."/>
            <person name="Steward C.A."/>
            <person name="Sycamore N."/>
            <person name="Tester J."/>
            <person name="Thomas D.W."/>
            <person name="Tracey A."/>
            <person name="Tromans A."/>
            <person name="Tubby B."/>
            <person name="Wall M."/>
            <person name="Wallis J.M."/>
            <person name="West A.P."/>
            <person name="Whitehead S.L."/>
            <person name="Willey D.L."/>
            <person name="Wilming L."/>
            <person name="Wray P.W."/>
            <person name="Wright M.W."/>
            <person name="Young L."/>
            <person name="Coulson A."/>
            <person name="Durbin R.M."/>
            <person name="Hubbard T."/>
            <person name="Sulston J.E."/>
            <person name="Beck S."/>
            <person name="Bentley D.R."/>
            <person name="Rogers J."/>
            <person name="Ross M.T."/>
        </authorList>
    </citation>
    <scope>NUCLEOTIDE SEQUENCE [LARGE SCALE GENOMIC DNA]</scope>
</reference>
<reference key="3">
    <citation type="submission" date="2005-07" db="EMBL/GenBank/DDBJ databases">
        <authorList>
            <person name="Mural R.J."/>
            <person name="Istrail S."/>
            <person name="Sutton G.G."/>
            <person name="Florea L."/>
            <person name="Halpern A.L."/>
            <person name="Mobarry C.M."/>
            <person name="Lippert R."/>
            <person name="Walenz B."/>
            <person name="Shatkay H."/>
            <person name="Dew I."/>
            <person name="Miller J.R."/>
            <person name="Flanigan M.J."/>
            <person name="Edwards N.J."/>
            <person name="Bolanos R."/>
            <person name="Fasulo D."/>
            <person name="Halldorsson B.V."/>
            <person name="Hannenhalli S."/>
            <person name="Turner R."/>
            <person name="Yooseph S."/>
            <person name="Lu F."/>
            <person name="Nusskern D.R."/>
            <person name="Shue B.C."/>
            <person name="Zheng X.H."/>
            <person name="Zhong F."/>
            <person name="Delcher A.L."/>
            <person name="Huson D.H."/>
            <person name="Kravitz S.A."/>
            <person name="Mouchard L."/>
            <person name="Reinert K."/>
            <person name="Remington K.A."/>
            <person name="Clark A.G."/>
            <person name="Waterman M.S."/>
            <person name="Eichler E.E."/>
            <person name="Adams M.D."/>
            <person name="Hunkapiller M.W."/>
            <person name="Myers E.W."/>
            <person name="Venter J.C."/>
        </authorList>
    </citation>
    <scope>NUCLEOTIDE SEQUENCE [LARGE SCALE GENOMIC DNA]</scope>
</reference>
<reference key="4">
    <citation type="journal article" date="2004" name="Genome Res.">
        <title>The status, quality, and expansion of the NIH full-length cDNA project: the Mammalian Gene Collection (MGC).</title>
        <authorList>
            <consortium name="The MGC Project Team"/>
        </authorList>
    </citation>
    <scope>NUCLEOTIDE SEQUENCE [LARGE SCALE MRNA]</scope>
    <source>
        <tissue>Brain</tissue>
    </source>
</reference>
<sequence>MERKINRREKEKEYEGKHNSLEDTDQGKNCKSTLMTLNVGGYLYITQKQTLTKYPDTFLEGIVNGKILCPFDADGHYFIDRDGLLFRHVLNFLRNGELLLPEGFRENQLLAQEAEFFQLKGLAEEVKSRWEKEQLTPRETTFLEITDNHDRSQGLRIFCNAPDFISKIKSRIVLVSKSRLDGFPEEFSISSNIIQFKYFIKSENGTRLVLKEDNTFVCTLETLKFEAIMMALKCGFRLLTSLDCSKGSIVHSDALHFIK</sequence>
<keyword id="KW-1267">Proteomics identification</keyword>
<keyword id="KW-1185">Reference proteome</keyword>
<dbReference type="EMBL" id="AK290675">
    <property type="protein sequence ID" value="BAF83364.1"/>
    <property type="molecule type" value="mRNA"/>
</dbReference>
<dbReference type="EMBL" id="AL138693">
    <property type="status" value="NOT_ANNOTATED_CDS"/>
    <property type="molecule type" value="Genomic_DNA"/>
</dbReference>
<dbReference type="EMBL" id="CH471075">
    <property type="protein sequence ID" value="EAX08730.1"/>
    <property type="molecule type" value="Genomic_DNA"/>
</dbReference>
<dbReference type="EMBL" id="BC018063">
    <property type="protein sequence ID" value="AAH18063.1"/>
    <property type="molecule type" value="mRNA"/>
</dbReference>
<dbReference type="CCDS" id="CCDS9396.1"/>
<dbReference type="RefSeq" id="NP_940686.2">
    <property type="nucleotide sequence ID" value="NM_198404.3"/>
</dbReference>
<dbReference type="SMR" id="Q8WVF5"/>
<dbReference type="BioGRID" id="132114">
    <property type="interactions" value="15"/>
</dbReference>
<dbReference type="FunCoup" id="Q8WVF5">
    <property type="interactions" value="9"/>
</dbReference>
<dbReference type="IntAct" id="Q8WVF5">
    <property type="interactions" value="9"/>
</dbReference>
<dbReference type="STRING" id="9606.ENSP00000368402"/>
<dbReference type="iPTMnet" id="Q8WVF5"/>
<dbReference type="PhosphoSitePlus" id="Q8WVF5"/>
<dbReference type="BioMuta" id="KCTD4"/>
<dbReference type="DMDM" id="206729877"/>
<dbReference type="MassIVE" id="Q8WVF5"/>
<dbReference type="PaxDb" id="9606-ENSP00000368402"/>
<dbReference type="PeptideAtlas" id="Q8WVF5"/>
<dbReference type="ProteomicsDB" id="74792"/>
<dbReference type="Antibodypedia" id="23595">
    <property type="antibodies" value="162 antibodies from 21 providers"/>
</dbReference>
<dbReference type="DNASU" id="386618"/>
<dbReference type="Ensembl" id="ENST00000379108.2">
    <property type="protein sequence ID" value="ENSP00000368402.1"/>
    <property type="gene ID" value="ENSG00000180332.7"/>
</dbReference>
<dbReference type="GeneID" id="386618"/>
<dbReference type="KEGG" id="hsa:386618"/>
<dbReference type="MANE-Select" id="ENST00000379108.2">
    <property type="protein sequence ID" value="ENSP00000368402.1"/>
    <property type="RefSeq nucleotide sequence ID" value="NM_198404.3"/>
    <property type="RefSeq protein sequence ID" value="NP_940686.2"/>
</dbReference>
<dbReference type="UCSC" id="uc058wts.1">
    <property type="organism name" value="human"/>
</dbReference>
<dbReference type="AGR" id="HGNC:23227"/>
<dbReference type="CTD" id="386618"/>
<dbReference type="DisGeNET" id="386618"/>
<dbReference type="GeneCards" id="KCTD4"/>
<dbReference type="HGNC" id="HGNC:23227">
    <property type="gene designation" value="KCTD4"/>
</dbReference>
<dbReference type="HPA" id="ENSG00000180332">
    <property type="expression patterns" value="Tissue enriched (brain)"/>
</dbReference>
<dbReference type="MIM" id="620638">
    <property type="type" value="gene"/>
</dbReference>
<dbReference type="neXtProt" id="NX_Q8WVF5"/>
<dbReference type="OpenTargets" id="ENSG00000180332"/>
<dbReference type="PharmGKB" id="PA134880839"/>
<dbReference type="VEuPathDB" id="HostDB:ENSG00000180332"/>
<dbReference type="eggNOG" id="KOG2723">
    <property type="taxonomic scope" value="Eukaryota"/>
</dbReference>
<dbReference type="GeneTree" id="ENSGT00940000159552"/>
<dbReference type="HOGENOM" id="CLU_1081647_0_0_1"/>
<dbReference type="InParanoid" id="Q8WVF5"/>
<dbReference type="OMA" id="GKKPVQH"/>
<dbReference type="OrthoDB" id="2414723at2759"/>
<dbReference type="PAN-GO" id="Q8WVF5">
    <property type="GO annotations" value="0 GO annotations based on evolutionary models"/>
</dbReference>
<dbReference type="PhylomeDB" id="Q8WVF5"/>
<dbReference type="TreeFam" id="TF315332"/>
<dbReference type="PathwayCommons" id="Q8WVF5"/>
<dbReference type="SignaLink" id="Q8WVF5"/>
<dbReference type="BioGRID-ORCS" id="386618">
    <property type="hits" value="10 hits in 1146 CRISPR screens"/>
</dbReference>
<dbReference type="GenomeRNAi" id="386618"/>
<dbReference type="Pharos" id="Q8WVF5">
    <property type="development level" value="Tdark"/>
</dbReference>
<dbReference type="PRO" id="PR:Q8WVF5"/>
<dbReference type="Proteomes" id="UP000005640">
    <property type="component" value="Chromosome 13"/>
</dbReference>
<dbReference type="RNAct" id="Q8WVF5">
    <property type="molecule type" value="protein"/>
</dbReference>
<dbReference type="Bgee" id="ENSG00000180332">
    <property type="expression patterns" value="Expressed in male germ line stem cell (sensu Vertebrata) in testis and 105 other cell types or tissues"/>
</dbReference>
<dbReference type="GO" id="GO:0042802">
    <property type="term" value="F:identical protein binding"/>
    <property type="evidence" value="ECO:0007669"/>
    <property type="project" value="UniProtKB-ARBA"/>
</dbReference>
<dbReference type="GO" id="GO:0051260">
    <property type="term" value="P:protein homooligomerization"/>
    <property type="evidence" value="ECO:0007669"/>
    <property type="project" value="InterPro"/>
</dbReference>
<dbReference type="CDD" id="cd18364">
    <property type="entry name" value="BTB_POZ_KCTD4"/>
    <property type="match status" value="1"/>
</dbReference>
<dbReference type="Gene3D" id="3.30.710.10">
    <property type="entry name" value="Potassium Channel Kv1.1, Chain A"/>
    <property type="match status" value="1"/>
</dbReference>
<dbReference type="InterPro" id="IPR000210">
    <property type="entry name" value="BTB/POZ_dom"/>
</dbReference>
<dbReference type="InterPro" id="IPR045740">
    <property type="entry name" value="KCTD4_C"/>
</dbReference>
<dbReference type="InterPro" id="IPR011333">
    <property type="entry name" value="SKP1/BTB/POZ_sf"/>
</dbReference>
<dbReference type="InterPro" id="IPR003131">
    <property type="entry name" value="T1-type_BTB"/>
</dbReference>
<dbReference type="PANTHER" id="PTHR14499:SF9">
    <property type="entry name" value="BTB_POZ DOMAIN-CONTAINING PROTEIN KCTD4"/>
    <property type="match status" value="1"/>
</dbReference>
<dbReference type="PANTHER" id="PTHR14499">
    <property type="entry name" value="POTASSIUM CHANNEL TETRAMERIZATION DOMAIN-CONTAINING"/>
    <property type="match status" value="1"/>
</dbReference>
<dbReference type="Pfam" id="PF02214">
    <property type="entry name" value="BTB_2"/>
    <property type="match status" value="1"/>
</dbReference>
<dbReference type="Pfam" id="PF19323">
    <property type="entry name" value="KCTD4_C"/>
    <property type="match status" value="1"/>
</dbReference>
<dbReference type="SMART" id="SM00225">
    <property type="entry name" value="BTB"/>
    <property type="match status" value="1"/>
</dbReference>
<dbReference type="SUPFAM" id="SSF54695">
    <property type="entry name" value="POZ domain"/>
    <property type="match status" value="1"/>
</dbReference>
<accession>Q8WVF5</accession>
<accession>Q5W0P9</accession>